<evidence type="ECO:0000255" key="1">
    <source>
        <dbReference type="HAMAP-Rule" id="MF_01211"/>
    </source>
</evidence>
<keyword id="KW-0001">2Fe-2S</keyword>
<keyword id="KW-0249">Electron transport</keyword>
<keyword id="KW-0274">FAD</keyword>
<keyword id="KW-0285">Flavoprotein</keyword>
<keyword id="KW-0408">Iron</keyword>
<keyword id="KW-0411">Iron-sulfur</keyword>
<keyword id="KW-0479">Metal-binding</keyword>
<keyword id="KW-0665">Pyrimidine biosynthesis</keyword>
<keyword id="KW-0813">Transport</keyword>
<protein>
    <recommendedName>
        <fullName evidence="1">Dihydroorotate dehydrogenase B (NAD(+)), electron transfer subunit</fullName>
    </recommendedName>
    <alternativeName>
        <fullName evidence="1">Dihydroorotate oxidase B, electron transfer subunit</fullName>
    </alternativeName>
</protein>
<gene>
    <name evidence="1" type="primary">pyrK</name>
    <name type="ordered locus">BPUM_1452</name>
</gene>
<feature type="chain" id="PRO_1000066400" description="Dihydroorotate dehydrogenase B (NAD(+)), electron transfer subunit">
    <location>
        <begin position="1"/>
        <end position="258"/>
    </location>
</feature>
<feature type="domain" description="FAD-binding FR-type" evidence="1">
    <location>
        <begin position="1"/>
        <end position="101"/>
    </location>
</feature>
<feature type="binding site" evidence="1">
    <location>
        <begin position="52"/>
        <end position="55"/>
    </location>
    <ligand>
        <name>FAD</name>
        <dbReference type="ChEBI" id="CHEBI:57692"/>
    </ligand>
</feature>
<feature type="binding site" evidence="1">
    <location>
        <begin position="69"/>
        <end position="71"/>
    </location>
    <ligand>
        <name>FAD</name>
        <dbReference type="ChEBI" id="CHEBI:57692"/>
    </ligand>
</feature>
<feature type="binding site" evidence="1">
    <location>
        <begin position="76"/>
        <end position="77"/>
    </location>
    <ligand>
        <name>FAD</name>
        <dbReference type="ChEBI" id="CHEBI:57692"/>
    </ligand>
</feature>
<feature type="binding site" evidence="1">
    <location>
        <position position="220"/>
    </location>
    <ligand>
        <name>[2Fe-2S] cluster</name>
        <dbReference type="ChEBI" id="CHEBI:190135"/>
    </ligand>
</feature>
<feature type="binding site" evidence="1">
    <location>
        <position position="225"/>
    </location>
    <ligand>
        <name>[2Fe-2S] cluster</name>
        <dbReference type="ChEBI" id="CHEBI:190135"/>
    </ligand>
</feature>
<feature type="binding site" evidence="1">
    <location>
        <position position="228"/>
    </location>
    <ligand>
        <name>[2Fe-2S] cluster</name>
        <dbReference type="ChEBI" id="CHEBI:190135"/>
    </ligand>
</feature>
<feature type="binding site" evidence="1">
    <location>
        <position position="243"/>
    </location>
    <ligand>
        <name>[2Fe-2S] cluster</name>
        <dbReference type="ChEBI" id="CHEBI:190135"/>
    </ligand>
</feature>
<proteinExistence type="inferred from homology"/>
<dbReference type="EMBL" id="CP000813">
    <property type="protein sequence ID" value="ABV62135.1"/>
    <property type="molecule type" value="Genomic_DNA"/>
</dbReference>
<dbReference type="RefSeq" id="WP_012009898.1">
    <property type="nucleotide sequence ID" value="NC_009848.4"/>
</dbReference>
<dbReference type="SMR" id="A8FD18"/>
<dbReference type="STRING" id="315750.BPUM_1452"/>
<dbReference type="GeneID" id="5620715"/>
<dbReference type="KEGG" id="bpu:BPUM_1452"/>
<dbReference type="eggNOG" id="COG0543">
    <property type="taxonomic scope" value="Bacteria"/>
</dbReference>
<dbReference type="HOGENOM" id="CLU_003827_1_2_9"/>
<dbReference type="OrthoDB" id="9778346at2"/>
<dbReference type="UniPathway" id="UPA00070">
    <property type="reaction ID" value="UER00945"/>
</dbReference>
<dbReference type="Proteomes" id="UP000001355">
    <property type="component" value="Chromosome"/>
</dbReference>
<dbReference type="GO" id="GO:0051537">
    <property type="term" value="F:2 iron, 2 sulfur cluster binding"/>
    <property type="evidence" value="ECO:0007669"/>
    <property type="project" value="UniProtKB-KW"/>
</dbReference>
<dbReference type="GO" id="GO:0009055">
    <property type="term" value="F:electron transfer activity"/>
    <property type="evidence" value="ECO:0007669"/>
    <property type="project" value="UniProtKB-UniRule"/>
</dbReference>
<dbReference type="GO" id="GO:0050660">
    <property type="term" value="F:flavin adenine dinucleotide binding"/>
    <property type="evidence" value="ECO:0007669"/>
    <property type="project" value="InterPro"/>
</dbReference>
<dbReference type="GO" id="GO:0046872">
    <property type="term" value="F:metal ion binding"/>
    <property type="evidence" value="ECO:0007669"/>
    <property type="project" value="UniProtKB-KW"/>
</dbReference>
<dbReference type="GO" id="GO:0016491">
    <property type="term" value="F:oxidoreductase activity"/>
    <property type="evidence" value="ECO:0007669"/>
    <property type="project" value="InterPro"/>
</dbReference>
<dbReference type="GO" id="GO:0044205">
    <property type="term" value="P:'de novo' UMP biosynthetic process"/>
    <property type="evidence" value="ECO:0007669"/>
    <property type="project" value="UniProtKB-UniRule"/>
</dbReference>
<dbReference type="CDD" id="cd06218">
    <property type="entry name" value="DHOD_e_trans"/>
    <property type="match status" value="1"/>
</dbReference>
<dbReference type="FunFam" id="2.10.240.10:FF:000001">
    <property type="entry name" value="Dihydroorotate dehydrogenase B (NAD(+)), electron transfer subunit"/>
    <property type="match status" value="1"/>
</dbReference>
<dbReference type="FunFam" id="3.40.50.80:FF:000017">
    <property type="entry name" value="Dihydroorotate dehydrogenase B (NAD(+)), electron transfer subunit"/>
    <property type="match status" value="1"/>
</dbReference>
<dbReference type="Gene3D" id="2.10.240.10">
    <property type="entry name" value="Dihydroorotate dehydrogenase, electron transfer subunit"/>
    <property type="match status" value="1"/>
</dbReference>
<dbReference type="Gene3D" id="3.40.50.80">
    <property type="entry name" value="Nucleotide-binding domain of ferredoxin-NADP reductase (FNR) module"/>
    <property type="match status" value="1"/>
</dbReference>
<dbReference type="Gene3D" id="2.40.30.10">
    <property type="entry name" value="Translation factors"/>
    <property type="match status" value="1"/>
</dbReference>
<dbReference type="HAMAP" id="MF_01211">
    <property type="entry name" value="DHODB_Fe_S_bind"/>
    <property type="match status" value="1"/>
</dbReference>
<dbReference type="InterPro" id="IPR012165">
    <property type="entry name" value="Cyt_c3_hydrogenase_gsu"/>
</dbReference>
<dbReference type="InterPro" id="IPR037117">
    <property type="entry name" value="Dihydroorotate_DH_ele_sf"/>
</dbReference>
<dbReference type="InterPro" id="IPR019480">
    <property type="entry name" value="Dihydroorotate_DH_Fe-S-bd"/>
</dbReference>
<dbReference type="InterPro" id="IPR023455">
    <property type="entry name" value="Dihydroorotate_DHASE_ETsu"/>
</dbReference>
<dbReference type="InterPro" id="IPR017927">
    <property type="entry name" value="FAD-bd_FR_type"/>
</dbReference>
<dbReference type="InterPro" id="IPR039261">
    <property type="entry name" value="FNR_nucleotide-bd"/>
</dbReference>
<dbReference type="InterPro" id="IPR050353">
    <property type="entry name" value="PyrK_electron_transfer"/>
</dbReference>
<dbReference type="InterPro" id="IPR017938">
    <property type="entry name" value="Riboflavin_synthase-like_b-brl"/>
</dbReference>
<dbReference type="NCBIfam" id="NF000797">
    <property type="entry name" value="PRK00054.1-2"/>
    <property type="match status" value="1"/>
</dbReference>
<dbReference type="NCBIfam" id="NF000799">
    <property type="entry name" value="PRK00054.1-4"/>
    <property type="match status" value="1"/>
</dbReference>
<dbReference type="PANTHER" id="PTHR43513">
    <property type="entry name" value="DIHYDROOROTATE DEHYDROGENASE B (NAD(+)), ELECTRON TRANSFER SUBUNIT"/>
    <property type="match status" value="1"/>
</dbReference>
<dbReference type="PANTHER" id="PTHR43513:SF3">
    <property type="entry name" value="DIHYDROOROTATE DEHYDROGENASE B (NAD(+)), ELECTRON TRANSFER SUBUNIT-RELATED"/>
    <property type="match status" value="1"/>
</dbReference>
<dbReference type="Pfam" id="PF10418">
    <property type="entry name" value="DHODB_Fe-S_bind"/>
    <property type="match status" value="1"/>
</dbReference>
<dbReference type="PIRSF" id="PIRSF006816">
    <property type="entry name" value="Cyc3_hyd_g"/>
    <property type="match status" value="1"/>
</dbReference>
<dbReference type="PRINTS" id="PR00409">
    <property type="entry name" value="PHDIOXRDTASE"/>
</dbReference>
<dbReference type="SUPFAM" id="SSF52343">
    <property type="entry name" value="Ferredoxin reductase-like, C-terminal NADP-linked domain"/>
    <property type="match status" value="1"/>
</dbReference>
<dbReference type="SUPFAM" id="SSF63380">
    <property type="entry name" value="Riboflavin synthase domain-like"/>
    <property type="match status" value="1"/>
</dbReference>
<dbReference type="PROSITE" id="PS51384">
    <property type="entry name" value="FAD_FR"/>
    <property type="match status" value="1"/>
</dbReference>
<name>PYRK_BACP2</name>
<sequence length="258" mass="28178">MKKAYLTVVSNREIADHIYEMTLKGDLVDSFQTAGQFLHIKVSESMTPLLRRPISIANIHAEKQEATIIYRAEGEGTKLLSQKRDGESIDVLGPLGNGYDPSVVQSGQTALLVGGGIGVPPLYELSKRLTKKGVIVKHVLGFQSKKDVFYEEKFQALGDTFIATVDGTYGAKGFVTNVIEENDLSFDVMLSCGPTPMLKALKDSYPDKPVYISMEERMGCGIGACFACVCHTDQHEKAYVKVCLDGPVFKAEEVALSC</sequence>
<accession>A8FD18</accession>
<organism>
    <name type="scientific">Bacillus pumilus (strain SAFR-032)</name>
    <dbReference type="NCBI Taxonomy" id="315750"/>
    <lineage>
        <taxon>Bacteria</taxon>
        <taxon>Bacillati</taxon>
        <taxon>Bacillota</taxon>
        <taxon>Bacilli</taxon>
        <taxon>Bacillales</taxon>
        <taxon>Bacillaceae</taxon>
        <taxon>Bacillus</taxon>
    </lineage>
</organism>
<reference key="1">
    <citation type="journal article" date="2007" name="PLoS ONE">
        <title>Paradoxical DNA repair and peroxide resistance gene conservation in Bacillus pumilus SAFR-032.</title>
        <authorList>
            <person name="Gioia J."/>
            <person name="Yerrapragada S."/>
            <person name="Qin X."/>
            <person name="Jiang H."/>
            <person name="Igboeli O.C."/>
            <person name="Muzny D."/>
            <person name="Dugan-Rocha S."/>
            <person name="Ding Y."/>
            <person name="Hawes A."/>
            <person name="Liu W."/>
            <person name="Perez L."/>
            <person name="Kovar C."/>
            <person name="Dinh H."/>
            <person name="Lee S."/>
            <person name="Nazareth L."/>
            <person name="Blyth P."/>
            <person name="Holder M."/>
            <person name="Buhay C."/>
            <person name="Tirumalai M.R."/>
            <person name="Liu Y."/>
            <person name="Dasgupta I."/>
            <person name="Bokhetache L."/>
            <person name="Fujita M."/>
            <person name="Karouia F."/>
            <person name="Eswara Moorthy P."/>
            <person name="Siefert J."/>
            <person name="Uzman A."/>
            <person name="Buzumbo P."/>
            <person name="Verma A."/>
            <person name="Zwiya H."/>
            <person name="McWilliams B.D."/>
            <person name="Olowu A."/>
            <person name="Clinkenbeard K.D."/>
            <person name="Newcombe D."/>
            <person name="Golebiewski L."/>
            <person name="Petrosino J.F."/>
            <person name="Nicholson W.L."/>
            <person name="Fox G.E."/>
            <person name="Venkateswaran K."/>
            <person name="Highlander S.K."/>
            <person name="Weinstock G.M."/>
        </authorList>
    </citation>
    <scope>NUCLEOTIDE SEQUENCE [LARGE SCALE GENOMIC DNA]</scope>
    <source>
        <strain>SAFR-032</strain>
    </source>
</reference>
<comment type="function">
    <text evidence="1">Responsible for channeling the electrons from the oxidation of dihydroorotate from the FMN redox center in the PyrD type B subunit to the ultimate electron acceptor NAD(+).</text>
</comment>
<comment type="cofactor">
    <cofactor evidence="1">
        <name>[2Fe-2S] cluster</name>
        <dbReference type="ChEBI" id="CHEBI:190135"/>
    </cofactor>
    <text evidence="1">Binds 1 [2Fe-2S] cluster per subunit.</text>
</comment>
<comment type="cofactor">
    <cofactor evidence="1">
        <name>FAD</name>
        <dbReference type="ChEBI" id="CHEBI:57692"/>
    </cofactor>
    <text evidence="1">Binds 1 FAD per subunit.</text>
</comment>
<comment type="pathway">
    <text evidence="1">Pyrimidine metabolism; UMP biosynthesis via de novo pathway; orotate from (S)-dihydroorotate (NAD(+) route): step 1/1.</text>
</comment>
<comment type="subunit">
    <text evidence="1">Heterotetramer of 2 PyrK and 2 PyrD type B subunits.</text>
</comment>
<comment type="similarity">
    <text evidence="1">Belongs to the PyrK family.</text>
</comment>